<accession>Q5T9Z0</accession>
<accession>Q8IVJ0</accession>
<reference key="1">
    <citation type="submission" date="2006-02" db="EMBL/GenBank/DDBJ databases">
        <title>Novel epididymis-specific mRNAs down-regulated by HE6/Gpr64 receptor gene disruption.</title>
        <authorList>
            <person name="Davies B."/>
            <person name="Davies M."/>
            <person name="Obermann H."/>
            <person name="Spiess A.N."/>
            <person name="Kirchhoff C."/>
        </authorList>
    </citation>
    <scope>NUCLEOTIDE SEQUENCE [MRNA]</scope>
    <source>
        <tissue>Epididymis</tissue>
    </source>
</reference>
<reference key="2">
    <citation type="journal article" date="2006" name="Nature">
        <title>The DNA sequence and biological annotation of human chromosome 1.</title>
        <authorList>
            <person name="Gregory S.G."/>
            <person name="Barlow K.F."/>
            <person name="McLay K.E."/>
            <person name="Kaul R."/>
            <person name="Swarbreck D."/>
            <person name="Dunham A."/>
            <person name="Scott C.E."/>
            <person name="Howe K.L."/>
            <person name="Woodfine K."/>
            <person name="Spencer C.C.A."/>
            <person name="Jones M.C."/>
            <person name="Gillson C."/>
            <person name="Searle S."/>
            <person name="Zhou Y."/>
            <person name="Kokocinski F."/>
            <person name="McDonald L."/>
            <person name="Evans R."/>
            <person name="Phillips K."/>
            <person name="Atkinson A."/>
            <person name="Cooper R."/>
            <person name="Jones C."/>
            <person name="Hall R.E."/>
            <person name="Andrews T.D."/>
            <person name="Lloyd C."/>
            <person name="Ainscough R."/>
            <person name="Almeida J.P."/>
            <person name="Ambrose K.D."/>
            <person name="Anderson F."/>
            <person name="Andrew R.W."/>
            <person name="Ashwell R.I.S."/>
            <person name="Aubin K."/>
            <person name="Babbage A.K."/>
            <person name="Bagguley C.L."/>
            <person name="Bailey J."/>
            <person name="Beasley H."/>
            <person name="Bethel G."/>
            <person name="Bird C.P."/>
            <person name="Bray-Allen S."/>
            <person name="Brown J.Y."/>
            <person name="Brown A.J."/>
            <person name="Buckley D."/>
            <person name="Burton J."/>
            <person name="Bye J."/>
            <person name="Carder C."/>
            <person name="Chapman J.C."/>
            <person name="Clark S.Y."/>
            <person name="Clarke G."/>
            <person name="Clee C."/>
            <person name="Cobley V."/>
            <person name="Collier R.E."/>
            <person name="Corby N."/>
            <person name="Coville G.J."/>
            <person name="Davies J."/>
            <person name="Deadman R."/>
            <person name="Dunn M."/>
            <person name="Earthrowl M."/>
            <person name="Ellington A.G."/>
            <person name="Errington H."/>
            <person name="Frankish A."/>
            <person name="Frankland J."/>
            <person name="French L."/>
            <person name="Garner P."/>
            <person name="Garnett J."/>
            <person name="Gay L."/>
            <person name="Ghori M.R.J."/>
            <person name="Gibson R."/>
            <person name="Gilby L.M."/>
            <person name="Gillett W."/>
            <person name="Glithero R.J."/>
            <person name="Grafham D.V."/>
            <person name="Griffiths C."/>
            <person name="Griffiths-Jones S."/>
            <person name="Grocock R."/>
            <person name="Hammond S."/>
            <person name="Harrison E.S.I."/>
            <person name="Hart E."/>
            <person name="Haugen E."/>
            <person name="Heath P.D."/>
            <person name="Holmes S."/>
            <person name="Holt K."/>
            <person name="Howden P.J."/>
            <person name="Hunt A.R."/>
            <person name="Hunt S.E."/>
            <person name="Hunter G."/>
            <person name="Isherwood J."/>
            <person name="James R."/>
            <person name="Johnson C."/>
            <person name="Johnson D."/>
            <person name="Joy A."/>
            <person name="Kay M."/>
            <person name="Kershaw J.K."/>
            <person name="Kibukawa M."/>
            <person name="Kimberley A.M."/>
            <person name="King A."/>
            <person name="Knights A.J."/>
            <person name="Lad H."/>
            <person name="Laird G."/>
            <person name="Lawlor S."/>
            <person name="Leongamornlert D.A."/>
            <person name="Lloyd D.M."/>
            <person name="Loveland J."/>
            <person name="Lovell J."/>
            <person name="Lush M.J."/>
            <person name="Lyne R."/>
            <person name="Martin S."/>
            <person name="Mashreghi-Mohammadi M."/>
            <person name="Matthews L."/>
            <person name="Matthews N.S.W."/>
            <person name="McLaren S."/>
            <person name="Milne S."/>
            <person name="Mistry S."/>
            <person name="Moore M.J.F."/>
            <person name="Nickerson T."/>
            <person name="O'Dell C.N."/>
            <person name="Oliver K."/>
            <person name="Palmeiri A."/>
            <person name="Palmer S.A."/>
            <person name="Parker A."/>
            <person name="Patel D."/>
            <person name="Pearce A.V."/>
            <person name="Peck A.I."/>
            <person name="Pelan S."/>
            <person name="Phelps K."/>
            <person name="Phillimore B.J."/>
            <person name="Plumb R."/>
            <person name="Rajan J."/>
            <person name="Raymond C."/>
            <person name="Rouse G."/>
            <person name="Saenphimmachak C."/>
            <person name="Sehra H.K."/>
            <person name="Sheridan E."/>
            <person name="Shownkeen R."/>
            <person name="Sims S."/>
            <person name="Skuce C.D."/>
            <person name="Smith M."/>
            <person name="Steward C."/>
            <person name="Subramanian S."/>
            <person name="Sycamore N."/>
            <person name="Tracey A."/>
            <person name="Tromans A."/>
            <person name="Van Helmond Z."/>
            <person name="Wall M."/>
            <person name="Wallis J.M."/>
            <person name="White S."/>
            <person name="Whitehead S.L."/>
            <person name="Wilkinson J.E."/>
            <person name="Willey D.L."/>
            <person name="Williams H."/>
            <person name="Wilming L."/>
            <person name="Wray P.W."/>
            <person name="Wu Z."/>
            <person name="Coulson A."/>
            <person name="Vaudin M."/>
            <person name="Sulston J.E."/>
            <person name="Durbin R.M."/>
            <person name="Hubbard T."/>
            <person name="Wooster R."/>
            <person name="Dunham I."/>
            <person name="Carter N.P."/>
            <person name="McVean G."/>
            <person name="Ross M.T."/>
            <person name="Harrow J."/>
            <person name="Olson M.V."/>
            <person name="Beck S."/>
            <person name="Rogers J."/>
            <person name="Bentley D.R."/>
        </authorList>
    </citation>
    <scope>NUCLEOTIDE SEQUENCE [LARGE SCALE GENOMIC DNA]</scope>
</reference>
<reference key="3">
    <citation type="submission" date="2005-07" db="EMBL/GenBank/DDBJ databases">
        <authorList>
            <person name="Mural R.J."/>
            <person name="Istrail S."/>
            <person name="Sutton G.G."/>
            <person name="Florea L."/>
            <person name="Halpern A.L."/>
            <person name="Mobarry C.M."/>
            <person name="Lippert R."/>
            <person name="Walenz B."/>
            <person name="Shatkay H."/>
            <person name="Dew I."/>
            <person name="Miller J.R."/>
            <person name="Flanigan M.J."/>
            <person name="Edwards N.J."/>
            <person name="Bolanos R."/>
            <person name="Fasulo D."/>
            <person name="Halldorsson B.V."/>
            <person name="Hannenhalli S."/>
            <person name="Turner R."/>
            <person name="Yooseph S."/>
            <person name="Lu F."/>
            <person name="Nusskern D.R."/>
            <person name="Shue B.C."/>
            <person name="Zheng X.H."/>
            <person name="Zhong F."/>
            <person name="Delcher A.L."/>
            <person name="Huson D.H."/>
            <person name="Kravitz S.A."/>
            <person name="Mouchard L."/>
            <person name="Reinert K."/>
            <person name="Remington K.A."/>
            <person name="Clark A.G."/>
            <person name="Waterman M.S."/>
            <person name="Eichler E.E."/>
            <person name="Adams M.D."/>
            <person name="Hunkapiller M.W."/>
            <person name="Myers E.W."/>
            <person name="Venter J.C."/>
        </authorList>
    </citation>
    <scope>NUCLEOTIDE SEQUENCE [LARGE SCALE GENOMIC DNA]</scope>
</reference>
<sequence length="273" mass="31315">MILKGCLLYPLCSPRNKQRCARLWKIAYGGLLKIVTGSLLTFYVVLCLDGGMVLMRKQVPSRFMYPKEWQHLTMFILLTLNGCVDFMSKNVLPQRCVGLEKGTLVLIIYELLLLMVSHVKDSEGVELHVYSLLILVVFLLLLVLTAELWAPNMCHLQLMETFLILMMGSWLMQAGFILYRPVSGYPWQDDDISDIMFVTTFFCWHVMINASFLLGIYGFSSFWYHCFRPSLKLTGPKEAPYYASTPGPLYKLLQEVEQSEKEDQALLLPKSSP</sequence>
<protein>
    <recommendedName>
        <fullName>Transmembrane epididymal protein 1</fullName>
    </recommendedName>
    <alternativeName>
        <fullName>Human epididymis-specific protein 9</fullName>
        <shortName>He9</shortName>
    </alternativeName>
</protein>
<evidence type="ECO:0000255" key="1"/>
<evidence type="ECO:0000305" key="2"/>
<gene>
    <name type="primary">TEDDM1</name>
    <name type="synonym">HE9</name>
</gene>
<comment type="subcellular location">
    <subcellularLocation>
        <location evidence="2">Membrane</location>
        <topology evidence="2">Multi-pass membrane protein</topology>
    </subcellularLocation>
</comment>
<comment type="similarity">
    <text evidence="2">Belongs to the TMEM45 family.</text>
</comment>
<dbReference type="EMBL" id="AJ515384">
    <property type="protein sequence ID" value="CAD56348.2"/>
    <property type="molecule type" value="mRNA"/>
</dbReference>
<dbReference type="EMBL" id="AL139344">
    <property type="status" value="NOT_ANNOTATED_CDS"/>
    <property type="molecule type" value="Genomic_DNA"/>
</dbReference>
<dbReference type="EMBL" id="CH471067">
    <property type="protein sequence ID" value="EAW91123.1"/>
    <property type="molecule type" value="Genomic_DNA"/>
</dbReference>
<dbReference type="CCDS" id="CCDS30953.1"/>
<dbReference type="RefSeq" id="NP_741997.3">
    <property type="nucleotide sequence ID" value="NM_172000.4"/>
</dbReference>
<dbReference type="SMR" id="Q5T9Z0"/>
<dbReference type="BioGRID" id="126075">
    <property type="interactions" value="1"/>
</dbReference>
<dbReference type="STRING" id="9606.ENSP00000356536"/>
<dbReference type="GlyGen" id="Q5T9Z0">
    <property type="glycosylation" value="1 site"/>
</dbReference>
<dbReference type="BioMuta" id="TEDDM1"/>
<dbReference type="DMDM" id="74745756"/>
<dbReference type="MassIVE" id="Q5T9Z0"/>
<dbReference type="PaxDb" id="9606-ENSP00000356536"/>
<dbReference type="PeptideAtlas" id="Q5T9Z0"/>
<dbReference type="DNASU" id="127670"/>
<dbReference type="Ensembl" id="ENST00000367565.2">
    <property type="protein sequence ID" value="ENSP00000356536.1"/>
    <property type="gene ID" value="ENSG00000203730.3"/>
</dbReference>
<dbReference type="GeneID" id="127670"/>
<dbReference type="KEGG" id="hsa:127670"/>
<dbReference type="MANE-Select" id="ENST00000367565.2">
    <property type="protein sequence ID" value="ENSP00000356536.1"/>
    <property type="RefSeq nucleotide sequence ID" value="NM_172000.4"/>
    <property type="RefSeq protein sequence ID" value="NP_741997.3"/>
</dbReference>
<dbReference type="UCSC" id="uc001gpe.3">
    <property type="organism name" value="human"/>
</dbReference>
<dbReference type="AGR" id="HGNC:30233"/>
<dbReference type="CTD" id="127670"/>
<dbReference type="GeneCards" id="TEDDM1"/>
<dbReference type="HGNC" id="HGNC:30233">
    <property type="gene designation" value="TEDDM1"/>
</dbReference>
<dbReference type="HPA" id="ENSG00000203730">
    <property type="expression patterns" value="Tissue enriched (epididymis)"/>
</dbReference>
<dbReference type="MIM" id="620288">
    <property type="type" value="gene"/>
</dbReference>
<dbReference type="neXtProt" id="NX_Q5T9Z0"/>
<dbReference type="OpenTargets" id="ENSG00000203730"/>
<dbReference type="PharmGKB" id="PA142670818"/>
<dbReference type="VEuPathDB" id="HostDB:ENSG00000203730"/>
<dbReference type="eggNOG" id="ENOG502QS1R">
    <property type="taxonomic scope" value="Eukaryota"/>
</dbReference>
<dbReference type="GeneTree" id="ENSGT00940000161715"/>
<dbReference type="HOGENOM" id="CLU_059568_1_0_1"/>
<dbReference type="InParanoid" id="Q5T9Z0"/>
<dbReference type="OMA" id="DGMVLMN"/>
<dbReference type="OrthoDB" id="551896at2759"/>
<dbReference type="PAN-GO" id="Q5T9Z0">
    <property type="GO annotations" value="0 GO annotations based on evolutionary models"/>
</dbReference>
<dbReference type="PhylomeDB" id="Q5T9Z0"/>
<dbReference type="TreeFam" id="TF328673"/>
<dbReference type="PathwayCommons" id="Q5T9Z0"/>
<dbReference type="BioGRID-ORCS" id="127670">
    <property type="hits" value="14 hits in 1140 CRISPR screens"/>
</dbReference>
<dbReference type="GenomeRNAi" id="127670"/>
<dbReference type="Pharos" id="Q5T9Z0">
    <property type="development level" value="Tdark"/>
</dbReference>
<dbReference type="PRO" id="PR:Q5T9Z0"/>
<dbReference type="Proteomes" id="UP000005640">
    <property type="component" value="Chromosome 1"/>
</dbReference>
<dbReference type="RNAct" id="Q5T9Z0">
    <property type="molecule type" value="protein"/>
</dbReference>
<dbReference type="Bgee" id="ENSG00000203730">
    <property type="expression patterns" value="Expressed in corpus epididymis and 15 other cell types or tissues"/>
</dbReference>
<dbReference type="GO" id="GO:0016020">
    <property type="term" value="C:membrane"/>
    <property type="evidence" value="ECO:0007669"/>
    <property type="project" value="UniProtKB-SubCell"/>
</dbReference>
<dbReference type="InterPro" id="IPR006904">
    <property type="entry name" value="DUF716"/>
</dbReference>
<dbReference type="PANTHER" id="PTHR46441">
    <property type="entry name" value="TRANSMEMBRANE EPIDIDYMAL FAMILY MEMBER 3"/>
    <property type="match status" value="1"/>
</dbReference>
<dbReference type="PANTHER" id="PTHR46441:SF2">
    <property type="entry name" value="TRANSMEMBRANE EPIDIDYMAL PROTEIN 1"/>
    <property type="match status" value="1"/>
</dbReference>
<dbReference type="Pfam" id="PF04819">
    <property type="entry name" value="DUF716"/>
    <property type="match status" value="1"/>
</dbReference>
<name>TEDM1_HUMAN</name>
<proteinExistence type="evidence at transcript level"/>
<keyword id="KW-0472">Membrane</keyword>
<keyword id="KW-1185">Reference proteome</keyword>
<keyword id="KW-0812">Transmembrane</keyword>
<keyword id="KW-1133">Transmembrane helix</keyword>
<feature type="chain" id="PRO_0000307129" description="Transmembrane epididymal protein 1">
    <location>
        <begin position="1"/>
        <end position="273"/>
    </location>
</feature>
<feature type="transmembrane region" description="Helical" evidence="1">
    <location>
        <begin position="34"/>
        <end position="54"/>
    </location>
</feature>
<feature type="transmembrane region" description="Helical" evidence="1">
    <location>
        <begin position="72"/>
        <end position="92"/>
    </location>
</feature>
<feature type="transmembrane region" description="Helical" evidence="1">
    <location>
        <begin position="96"/>
        <end position="116"/>
    </location>
</feature>
<feature type="transmembrane region" description="Helical" evidence="1">
    <location>
        <begin position="129"/>
        <end position="149"/>
    </location>
</feature>
<feature type="transmembrane region" description="Helical" evidence="1">
    <location>
        <begin position="158"/>
        <end position="178"/>
    </location>
</feature>
<feature type="transmembrane region" description="Helical" evidence="1">
    <location>
        <begin position="195"/>
        <end position="215"/>
    </location>
</feature>
<feature type="sequence variant" id="VAR_035356" description="In dbSNP:rs6674281.">
    <original>Y</original>
    <variation>H</variation>
    <location>
        <position position="130"/>
    </location>
</feature>
<feature type="sequence conflict" description="In Ref. 1; CAD56348." evidence="2" ref="1">
    <original>L</original>
    <variation>V</variation>
    <location>
        <position position="7"/>
    </location>
</feature>
<feature type="sequence conflict" description="In Ref. 1; CAD56348." evidence="2" ref="1">
    <original>A</original>
    <variation>S</variation>
    <location>
        <position position="21"/>
    </location>
</feature>
<feature type="sequence conflict" description="In Ref. 1; CAD56348." evidence="2" ref="1">
    <original>A</original>
    <variation>S</variation>
    <location>
        <position position="27"/>
    </location>
</feature>
<feature type="sequence conflict" description="In Ref. 1; CAD56348." evidence="2" ref="1">
    <original>Y</original>
    <variation>N</variation>
    <location>
        <position position="43"/>
    </location>
</feature>
<feature type="sequence conflict" description="In Ref. 1; CAD56348." evidence="2" ref="1">
    <original>G</original>
    <variation>S</variation>
    <location>
        <position position="50"/>
    </location>
</feature>
<organism>
    <name type="scientific">Homo sapiens</name>
    <name type="common">Human</name>
    <dbReference type="NCBI Taxonomy" id="9606"/>
    <lineage>
        <taxon>Eukaryota</taxon>
        <taxon>Metazoa</taxon>
        <taxon>Chordata</taxon>
        <taxon>Craniata</taxon>
        <taxon>Vertebrata</taxon>
        <taxon>Euteleostomi</taxon>
        <taxon>Mammalia</taxon>
        <taxon>Eutheria</taxon>
        <taxon>Euarchontoglires</taxon>
        <taxon>Primates</taxon>
        <taxon>Haplorrhini</taxon>
        <taxon>Catarrhini</taxon>
        <taxon>Hominidae</taxon>
        <taxon>Homo</taxon>
    </lineage>
</organism>